<reference key="1">
    <citation type="journal article" date="2008" name="J. Bacteriol.">
        <title>The genome of Heliobacterium modesticaldum, a phototrophic representative of the Firmicutes containing the simplest photosynthetic apparatus.</title>
        <authorList>
            <person name="Sattley W.M."/>
            <person name="Madigan M.T."/>
            <person name="Swingley W.D."/>
            <person name="Cheung P.C."/>
            <person name="Clocksin K.M."/>
            <person name="Conrad A.L."/>
            <person name="Dejesa L.C."/>
            <person name="Honchak B.M."/>
            <person name="Jung D.O."/>
            <person name="Karbach L.E."/>
            <person name="Kurdoglu A."/>
            <person name="Lahiri S."/>
            <person name="Mastrian S.D."/>
            <person name="Page L.E."/>
            <person name="Taylor H.L."/>
            <person name="Wang Z.T."/>
            <person name="Raymond J."/>
            <person name="Chen M."/>
            <person name="Blankenship R.E."/>
            <person name="Touchman J.W."/>
        </authorList>
    </citation>
    <scope>NUCLEOTIDE SEQUENCE [LARGE SCALE GENOMIC DNA]</scope>
    <source>
        <strain>ATCC 51547 / Ice1</strain>
    </source>
</reference>
<keyword id="KW-0030">Aminoacyl-tRNA synthetase</keyword>
<keyword id="KW-0067">ATP-binding</keyword>
<keyword id="KW-0963">Cytoplasm</keyword>
<keyword id="KW-0436">Ligase</keyword>
<keyword id="KW-0547">Nucleotide-binding</keyword>
<keyword id="KW-0648">Protein biosynthesis</keyword>
<keyword id="KW-1185">Reference proteome</keyword>
<name>SYE_HELMI</name>
<sequence>MENIRVRFAPSPTGPLHIGGARSALFNFLLARRFGGQFIVRVEDTDLERSSRESEDNILDALEWLGITWDEGIRVGGPHAPYRQTERLHTYREAADKLLAEGKAYRCYCSEEELEAERQAFAEKGELPRYSGRCRSLSADDEARLRAEGRKPVIRFRVPDEGAVAIDDLVRGHVSFECAGIGDFIIVKSDGIPTYNFAVVIDDAQMAITHVIRGEEHLSNTPRQLLIYDALGLTPPKFAHVSLILGKDRSKMSKRHGSTSVVAYQRQGYLPEALVNFLVLLGWSPGGEEEIFSLDDLIAQFSLDRVAKSPAVFDFEKLNWINGVYLRKADLDRLVALAMPHLIEAGVVQEPLDEAAARKVRYMVQAIQEKVSYMAQIVDFIPLFFGDAITFESDEAKAVLTEEQVPKVLKACLRKLTEGRDLTPDNVKAMLKEVTKETKEKGRNVFMPIRVALTGQQHGPDLNALITALGREGAVNRIRRAAELAGVALGSSPFSC</sequence>
<feature type="chain" id="PRO_0000367689" description="Glutamate--tRNA ligase">
    <location>
        <begin position="1"/>
        <end position="496"/>
    </location>
</feature>
<feature type="short sequence motif" description="'HIGH' region" evidence="1">
    <location>
        <begin position="10"/>
        <end position="20"/>
    </location>
</feature>
<feature type="short sequence motif" description="'KMSKS' region" evidence="1">
    <location>
        <begin position="251"/>
        <end position="255"/>
    </location>
</feature>
<feature type="binding site" evidence="1">
    <location>
        <position position="254"/>
    </location>
    <ligand>
        <name>ATP</name>
        <dbReference type="ChEBI" id="CHEBI:30616"/>
    </ligand>
</feature>
<dbReference type="EC" id="6.1.1.17" evidence="1"/>
<dbReference type="EMBL" id="CP000930">
    <property type="protein sequence ID" value="ABZ83932.1"/>
    <property type="molecule type" value="Genomic_DNA"/>
</dbReference>
<dbReference type="RefSeq" id="WP_012282448.1">
    <property type="nucleotide sequence ID" value="NC_010337.2"/>
</dbReference>
<dbReference type="SMR" id="B0TBU3"/>
<dbReference type="STRING" id="498761.HM1_1355"/>
<dbReference type="KEGG" id="hmo:HM1_1355"/>
<dbReference type="eggNOG" id="COG0008">
    <property type="taxonomic scope" value="Bacteria"/>
</dbReference>
<dbReference type="HOGENOM" id="CLU_015768_6_3_9"/>
<dbReference type="OrthoDB" id="9807503at2"/>
<dbReference type="Proteomes" id="UP000008550">
    <property type="component" value="Chromosome"/>
</dbReference>
<dbReference type="GO" id="GO:0005829">
    <property type="term" value="C:cytosol"/>
    <property type="evidence" value="ECO:0007669"/>
    <property type="project" value="TreeGrafter"/>
</dbReference>
<dbReference type="GO" id="GO:0005524">
    <property type="term" value="F:ATP binding"/>
    <property type="evidence" value="ECO:0007669"/>
    <property type="project" value="UniProtKB-UniRule"/>
</dbReference>
<dbReference type="GO" id="GO:0004818">
    <property type="term" value="F:glutamate-tRNA ligase activity"/>
    <property type="evidence" value="ECO:0007669"/>
    <property type="project" value="UniProtKB-UniRule"/>
</dbReference>
<dbReference type="GO" id="GO:0000049">
    <property type="term" value="F:tRNA binding"/>
    <property type="evidence" value="ECO:0007669"/>
    <property type="project" value="InterPro"/>
</dbReference>
<dbReference type="GO" id="GO:0008270">
    <property type="term" value="F:zinc ion binding"/>
    <property type="evidence" value="ECO:0007669"/>
    <property type="project" value="InterPro"/>
</dbReference>
<dbReference type="GO" id="GO:0006424">
    <property type="term" value="P:glutamyl-tRNA aminoacylation"/>
    <property type="evidence" value="ECO:0007669"/>
    <property type="project" value="UniProtKB-UniRule"/>
</dbReference>
<dbReference type="CDD" id="cd00808">
    <property type="entry name" value="GluRS_core"/>
    <property type="match status" value="1"/>
</dbReference>
<dbReference type="FunFam" id="1.10.10.350:FF:000002">
    <property type="entry name" value="Glutamate--tRNA ligase"/>
    <property type="match status" value="1"/>
</dbReference>
<dbReference type="FunFam" id="3.40.50.620:FF:000045">
    <property type="entry name" value="Glutamate--tRNA ligase, mitochondrial"/>
    <property type="match status" value="1"/>
</dbReference>
<dbReference type="Gene3D" id="1.10.10.350">
    <property type="match status" value="1"/>
</dbReference>
<dbReference type="Gene3D" id="3.40.50.620">
    <property type="entry name" value="HUPs"/>
    <property type="match status" value="1"/>
</dbReference>
<dbReference type="HAMAP" id="MF_00022">
    <property type="entry name" value="Glu_tRNA_synth_type1"/>
    <property type="match status" value="1"/>
</dbReference>
<dbReference type="InterPro" id="IPR045462">
    <property type="entry name" value="aa-tRNA-synth_I_cd-bd"/>
</dbReference>
<dbReference type="InterPro" id="IPR020751">
    <property type="entry name" value="aa-tRNA-synth_I_codon-bd_sub2"/>
</dbReference>
<dbReference type="InterPro" id="IPR001412">
    <property type="entry name" value="aa-tRNA-synth_I_CS"/>
</dbReference>
<dbReference type="InterPro" id="IPR008925">
    <property type="entry name" value="aa_tRNA-synth_I_cd-bd_sf"/>
</dbReference>
<dbReference type="InterPro" id="IPR004527">
    <property type="entry name" value="Glu-tRNA-ligase_bac/mito"/>
</dbReference>
<dbReference type="InterPro" id="IPR000924">
    <property type="entry name" value="Glu/Gln-tRNA-synth"/>
</dbReference>
<dbReference type="InterPro" id="IPR020058">
    <property type="entry name" value="Glu/Gln-tRNA-synth_Ib_cat-dom"/>
</dbReference>
<dbReference type="InterPro" id="IPR049940">
    <property type="entry name" value="GluQ/Sye"/>
</dbReference>
<dbReference type="InterPro" id="IPR033910">
    <property type="entry name" value="GluRS_core"/>
</dbReference>
<dbReference type="InterPro" id="IPR014729">
    <property type="entry name" value="Rossmann-like_a/b/a_fold"/>
</dbReference>
<dbReference type="NCBIfam" id="TIGR00464">
    <property type="entry name" value="gltX_bact"/>
    <property type="match status" value="1"/>
</dbReference>
<dbReference type="PANTHER" id="PTHR43311">
    <property type="entry name" value="GLUTAMATE--TRNA LIGASE"/>
    <property type="match status" value="1"/>
</dbReference>
<dbReference type="PANTHER" id="PTHR43311:SF2">
    <property type="entry name" value="GLUTAMATE--TRNA LIGASE, MITOCHONDRIAL-RELATED"/>
    <property type="match status" value="1"/>
</dbReference>
<dbReference type="Pfam" id="PF19269">
    <property type="entry name" value="Anticodon_2"/>
    <property type="match status" value="1"/>
</dbReference>
<dbReference type="Pfam" id="PF00749">
    <property type="entry name" value="tRNA-synt_1c"/>
    <property type="match status" value="1"/>
</dbReference>
<dbReference type="PRINTS" id="PR00987">
    <property type="entry name" value="TRNASYNTHGLU"/>
</dbReference>
<dbReference type="SUPFAM" id="SSF48163">
    <property type="entry name" value="An anticodon-binding domain of class I aminoacyl-tRNA synthetases"/>
    <property type="match status" value="1"/>
</dbReference>
<dbReference type="SUPFAM" id="SSF52374">
    <property type="entry name" value="Nucleotidylyl transferase"/>
    <property type="match status" value="1"/>
</dbReference>
<dbReference type="PROSITE" id="PS00178">
    <property type="entry name" value="AA_TRNA_LIGASE_I"/>
    <property type="match status" value="1"/>
</dbReference>
<protein>
    <recommendedName>
        <fullName evidence="1">Glutamate--tRNA ligase</fullName>
        <ecNumber evidence="1">6.1.1.17</ecNumber>
    </recommendedName>
    <alternativeName>
        <fullName evidence="1">Glutamyl-tRNA synthetase</fullName>
        <shortName evidence="1">GluRS</shortName>
    </alternativeName>
</protein>
<organism>
    <name type="scientific">Heliobacterium modesticaldum (strain ATCC 51547 / Ice1)</name>
    <dbReference type="NCBI Taxonomy" id="498761"/>
    <lineage>
        <taxon>Bacteria</taxon>
        <taxon>Bacillati</taxon>
        <taxon>Bacillota</taxon>
        <taxon>Clostridia</taxon>
        <taxon>Eubacteriales</taxon>
        <taxon>Heliobacteriaceae</taxon>
        <taxon>Heliomicrobium</taxon>
    </lineage>
</organism>
<gene>
    <name evidence="1" type="primary">gltX</name>
    <name type="ordered locus">Helmi_13070</name>
    <name type="ORF">HM1_1355</name>
</gene>
<proteinExistence type="inferred from homology"/>
<accession>B0TBU3</accession>
<comment type="function">
    <text evidence="1">Catalyzes the attachment of glutamate to tRNA(Glu) in a two-step reaction: glutamate is first activated by ATP to form Glu-AMP and then transferred to the acceptor end of tRNA(Glu).</text>
</comment>
<comment type="catalytic activity">
    <reaction evidence="1">
        <text>tRNA(Glu) + L-glutamate + ATP = L-glutamyl-tRNA(Glu) + AMP + diphosphate</text>
        <dbReference type="Rhea" id="RHEA:23540"/>
        <dbReference type="Rhea" id="RHEA-COMP:9663"/>
        <dbReference type="Rhea" id="RHEA-COMP:9680"/>
        <dbReference type="ChEBI" id="CHEBI:29985"/>
        <dbReference type="ChEBI" id="CHEBI:30616"/>
        <dbReference type="ChEBI" id="CHEBI:33019"/>
        <dbReference type="ChEBI" id="CHEBI:78442"/>
        <dbReference type="ChEBI" id="CHEBI:78520"/>
        <dbReference type="ChEBI" id="CHEBI:456215"/>
        <dbReference type="EC" id="6.1.1.17"/>
    </reaction>
</comment>
<comment type="subunit">
    <text evidence="1">Monomer.</text>
</comment>
<comment type="subcellular location">
    <subcellularLocation>
        <location evidence="1">Cytoplasm</location>
    </subcellularLocation>
</comment>
<comment type="similarity">
    <text evidence="1">Belongs to the class-I aminoacyl-tRNA synthetase family. Glutamate--tRNA ligase type 1 subfamily.</text>
</comment>
<evidence type="ECO:0000255" key="1">
    <source>
        <dbReference type="HAMAP-Rule" id="MF_00022"/>
    </source>
</evidence>